<reference key="1">
    <citation type="journal article" date="2009" name="BMC Genomics">
        <title>Metabolic analysis of the soil microbe Dechloromonas aromatica str. RCB: indications of a surprisingly complex life-style and cryptic anaerobic pathways for aromatic degradation.</title>
        <authorList>
            <person name="Salinero K.K."/>
            <person name="Keller K."/>
            <person name="Feil W.S."/>
            <person name="Feil H."/>
            <person name="Trong S."/>
            <person name="Di Bartolo G."/>
            <person name="Lapidus A."/>
        </authorList>
    </citation>
    <scope>NUCLEOTIDE SEQUENCE [LARGE SCALE GENOMIC DNA]</scope>
    <source>
        <strain>RCB</strain>
    </source>
</reference>
<proteinExistence type="inferred from homology"/>
<organism>
    <name type="scientific">Dechloromonas aromatica (strain RCB)</name>
    <dbReference type="NCBI Taxonomy" id="159087"/>
    <lineage>
        <taxon>Bacteria</taxon>
        <taxon>Pseudomonadati</taxon>
        <taxon>Pseudomonadota</taxon>
        <taxon>Betaproteobacteria</taxon>
        <taxon>Rhodocyclales</taxon>
        <taxon>Azonexaceae</taxon>
        <taxon>Dechloromonas</taxon>
    </lineage>
</organism>
<comment type="function">
    <text evidence="1">NDH-1 shuttles electrons from NADH, via FMN and iron-sulfur (Fe-S) centers, to quinones in the respiratory chain. The immediate electron acceptor for the enzyme in this species is believed to be ubiquinone. Couples the redox reaction to proton translocation (for every two electrons transferred, four hydrogen ions are translocated across the cytoplasmic membrane), and thus conserves the redox energy in a proton gradient.</text>
</comment>
<comment type="catalytic activity">
    <reaction evidence="1">
        <text>a quinone + NADH + 5 H(+)(in) = a quinol + NAD(+) + 4 H(+)(out)</text>
        <dbReference type="Rhea" id="RHEA:57888"/>
        <dbReference type="ChEBI" id="CHEBI:15378"/>
        <dbReference type="ChEBI" id="CHEBI:24646"/>
        <dbReference type="ChEBI" id="CHEBI:57540"/>
        <dbReference type="ChEBI" id="CHEBI:57945"/>
        <dbReference type="ChEBI" id="CHEBI:132124"/>
    </reaction>
</comment>
<comment type="subunit">
    <text evidence="1">NDH-1 is composed of 14 different subunits. Subunits NuoB, C, D, E, F, and G constitute the peripheral sector of the complex.</text>
</comment>
<comment type="subcellular location">
    <subcellularLocation>
        <location evidence="1">Cell inner membrane</location>
        <topology evidence="1">Peripheral membrane protein</topology>
        <orientation evidence="1">Cytoplasmic side</orientation>
    </subcellularLocation>
</comment>
<comment type="similarity">
    <text evidence="1">Belongs to the complex I 30 kDa subunit family.</text>
</comment>
<accession>Q47HH4</accession>
<protein>
    <recommendedName>
        <fullName evidence="1">NADH-quinone oxidoreductase subunit C</fullName>
        <ecNumber evidence="1">7.1.1.-</ecNumber>
    </recommendedName>
    <alternativeName>
        <fullName evidence="1">NADH dehydrogenase I subunit C</fullName>
    </alternativeName>
    <alternativeName>
        <fullName evidence="1">NDH-1 subunit C</fullName>
    </alternativeName>
</protein>
<sequence>MSAKLETLSQNLQEHFGDKLKSLKLALGEITIEVAAADYFCVMTALRDEAAFGFEEMIDLCGVDYSTYGDGTWQGARFAVVVHLLSVANNWRLRVRVFAEDEGFPSVASITTVWASANWFEREAFDLYGIAFVGHDDLRRILTDYGFIGHPFRKDFPISGHVEMRYDPDQARVIYQPVTIEPRENTPRIVREDTFGDTAHG</sequence>
<evidence type="ECO:0000255" key="1">
    <source>
        <dbReference type="HAMAP-Rule" id="MF_01357"/>
    </source>
</evidence>
<feature type="chain" id="PRO_0000358089" description="NADH-quinone oxidoreductase subunit C">
    <location>
        <begin position="1"/>
        <end position="201"/>
    </location>
</feature>
<keyword id="KW-0997">Cell inner membrane</keyword>
<keyword id="KW-1003">Cell membrane</keyword>
<keyword id="KW-0472">Membrane</keyword>
<keyword id="KW-0520">NAD</keyword>
<keyword id="KW-0874">Quinone</keyword>
<keyword id="KW-1278">Translocase</keyword>
<keyword id="KW-0813">Transport</keyword>
<keyword id="KW-0830">Ubiquinone</keyword>
<name>NUOC_DECAR</name>
<dbReference type="EC" id="7.1.1.-" evidence="1"/>
<dbReference type="EMBL" id="CP000089">
    <property type="protein sequence ID" value="AAZ45707.1"/>
    <property type="molecule type" value="Genomic_DNA"/>
</dbReference>
<dbReference type="SMR" id="Q47HH4"/>
<dbReference type="STRING" id="159087.Daro_0951"/>
<dbReference type="KEGG" id="dar:Daro_0951"/>
<dbReference type="eggNOG" id="COG0852">
    <property type="taxonomic scope" value="Bacteria"/>
</dbReference>
<dbReference type="HOGENOM" id="CLU_042628_2_1_4"/>
<dbReference type="OrthoDB" id="9803286at2"/>
<dbReference type="GO" id="GO:0005886">
    <property type="term" value="C:plasma membrane"/>
    <property type="evidence" value="ECO:0007669"/>
    <property type="project" value="UniProtKB-SubCell"/>
</dbReference>
<dbReference type="GO" id="GO:0008137">
    <property type="term" value="F:NADH dehydrogenase (ubiquinone) activity"/>
    <property type="evidence" value="ECO:0007669"/>
    <property type="project" value="InterPro"/>
</dbReference>
<dbReference type="GO" id="GO:0050136">
    <property type="term" value="F:NADH:ubiquinone reductase (non-electrogenic) activity"/>
    <property type="evidence" value="ECO:0007669"/>
    <property type="project" value="UniProtKB-UniRule"/>
</dbReference>
<dbReference type="GO" id="GO:0048038">
    <property type="term" value="F:quinone binding"/>
    <property type="evidence" value="ECO:0007669"/>
    <property type="project" value="UniProtKB-KW"/>
</dbReference>
<dbReference type="Gene3D" id="3.30.460.80">
    <property type="entry name" value="NADH:ubiquinone oxidoreductase, 30kDa subunit"/>
    <property type="match status" value="1"/>
</dbReference>
<dbReference type="HAMAP" id="MF_01357">
    <property type="entry name" value="NDH1_NuoC"/>
    <property type="match status" value="1"/>
</dbReference>
<dbReference type="InterPro" id="IPR010218">
    <property type="entry name" value="NADH_DH_suC"/>
</dbReference>
<dbReference type="InterPro" id="IPR037232">
    <property type="entry name" value="NADH_quin_OxRdtase_su_C/D-like"/>
</dbReference>
<dbReference type="InterPro" id="IPR001268">
    <property type="entry name" value="NADH_UbQ_OxRdtase_30kDa_su"/>
</dbReference>
<dbReference type="InterPro" id="IPR020396">
    <property type="entry name" value="NADH_UbQ_OxRdtase_CS"/>
</dbReference>
<dbReference type="NCBIfam" id="TIGR01961">
    <property type="entry name" value="NuoC_fam"/>
    <property type="match status" value="1"/>
</dbReference>
<dbReference type="NCBIfam" id="NF004730">
    <property type="entry name" value="PRK06074.1-1"/>
    <property type="match status" value="1"/>
</dbReference>
<dbReference type="PANTHER" id="PTHR10884:SF14">
    <property type="entry name" value="NADH DEHYDROGENASE [UBIQUINONE] IRON-SULFUR PROTEIN 3, MITOCHONDRIAL"/>
    <property type="match status" value="1"/>
</dbReference>
<dbReference type="PANTHER" id="PTHR10884">
    <property type="entry name" value="NADH DEHYDROGENASE UBIQUINONE IRON-SULFUR PROTEIN 3"/>
    <property type="match status" value="1"/>
</dbReference>
<dbReference type="Pfam" id="PF00329">
    <property type="entry name" value="Complex1_30kDa"/>
    <property type="match status" value="1"/>
</dbReference>
<dbReference type="SUPFAM" id="SSF143243">
    <property type="entry name" value="Nqo5-like"/>
    <property type="match status" value="1"/>
</dbReference>
<dbReference type="PROSITE" id="PS00542">
    <property type="entry name" value="COMPLEX1_30K"/>
    <property type="match status" value="1"/>
</dbReference>
<gene>
    <name evidence="1" type="primary">nuoC</name>
    <name type="ordered locus">Daro_0951</name>
</gene>